<reference key="1">
    <citation type="submission" date="2007-11" db="EMBL/GenBank/DDBJ databases">
        <title>Complete sequence of Delftia acidovorans DSM 14801 / SPH-1.</title>
        <authorList>
            <person name="Copeland A."/>
            <person name="Lucas S."/>
            <person name="Lapidus A."/>
            <person name="Barry K."/>
            <person name="Glavina del Rio T."/>
            <person name="Dalin E."/>
            <person name="Tice H."/>
            <person name="Pitluck S."/>
            <person name="Lowry S."/>
            <person name="Clum A."/>
            <person name="Schmutz J."/>
            <person name="Larimer F."/>
            <person name="Land M."/>
            <person name="Hauser L."/>
            <person name="Kyrpides N."/>
            <person name="Kim E."/>
            <person name="Schleheck D."/>
            <person name="Richardson P."/>
        </authorList>
    </citation>
    <scope>NUCLEOTIDE SEQUENCE [LARGE SCALE GENOMIC DNA]</scope>
    <source>
        <strain>DSM 14801 / SPH-1</strain>
    </source>
</reference>
<organism>
    <name type="scientific">Delftia acidovorans (strain DSM 14801 / SPH-1)</name>
    <dbReference type="NCBI Taxonomy" id="398578"/>
    <lineage>
        <taxon>Bacteria</taxon>
        <taxon>Pseudomonadati</taxon>
        <taxon>Pseudomonadota</taxon>
        <taxon>Betaproteobacteria</taxon>
        <taxon>Burkholderiales</taxon>
        <taxon>Comamonadaceae</taxon>
        <taxon>Delftia</taxon>
    </lineage>
</organism>
<proteinExistence type="inferred from homology"/>
<dbReference type="EMBL" id="CP000884">
    <property type="protein sequence ID" value="ABX33152.1"/>
    <property type="molecule type" value="Genomic_DNA"/>
</dbReference>
<dbReference type="RefSeq" id="WP_012202438.1">
    <property type="nucleotide sequence ID" value="NC_010002.1"/>
</dbReference>
<dbReference type="SMR" id="A9BR94"/>
<dbReference type="STRING" id="398578.Daci_0506"/>
<dbReference type="GeneID" id="94689785"/>
<dbReference type="KEGG" id="dac:Daci_0506"/>
<dbReference type="eggNOG" id="COG0080">
    <property type="taxonomic scope" value="Bacteria"/>
</dbReference>
<dbReference type="HOGENOM" id="CLU_074237_2_0_4"/>
<dbReference type="Proteomes" id="UP000000784">
    <property type="component" value="Chromosome"/>
</dbReference>
<dbReference type="GO" id="GO:0022625">
    <property type="term" value="C:cytosolic large ribosomal subunit"/>
    <property type="evidence" value="ECO:0007669"/>
    <property type="project" value="TreeGrafter"/>
</dbReference>
<dbReference type="GO" id="GO:0070180">
    <property type="term" value="F:large ribosomal subunit rRNA binding"/>
    <property type="evidence" value="ECO:0007669"/>
    <property type="project" value="UniProtKB-UniRule"/>
</dbReference>
<dbReference type="GO" id="GO:0003735">
    <property type="term" value="F:structural constituent of ribosome"/>
    <property type="evidence" value="ECO:0007669"/>
    <property type="project" value="InterPro"/>
</dbReference>
<dbReference type="GO" id="GO:0006412">
    <property type="term" value="P:translation"/>
    <property type="evidence" value="ECO:0007669"/>
    <property type="project" value="UniProtKB-UniRule"/>
</dbReference>
<dbReference type="CDD" id="cd00349">
    <property type="entry name" value="Ribosomal_L11"/>
    <property type="match status" value="1"/>
</dbReference>
<dbReference type="FunFam" id="1.10.10.250:FF:000001">
    <property type="entry name" value="50S ribosomal protein L11"/>
    <property type="match status" value="1"/>
</dbReference>
<dbReference type="FunFam" id="3.30.1550.10:FF:000001">
    <property type="entry name" value="50S ribosomal protein L11"/>
    <property type="match status" value="1"/>
</dbReference>
<dbReference type="Gene3D" id="1.10.10.250">
    <property type="entry name" value="Ribosomal protein L11, C-terminal domain"/>
    <property type="match status" value="1"/>
</dbReference>
<dbReference type="Gene3D" id="3.30.1550.10">
    <property type="entry name" value="Ribosomal protein L11/L12, N-terminal domain"/>
    <property type="match status" value="1"/>
</dbReference>
<dbReference type="HAMAP" id="MF_00736">
    <property type="entry name" value="Ribosomal_uL11"/>
    <property type="match status" value="1"/>
</dbReference>
<dbReference type="InterPro" id="IPR000911">
    <property type="entry name" value="Ribosomal_uL11"/>
</dbReference>
<dbReference type="InterPro" id="IPR006519">
    <property type="entry name" value="Ribosomal_uL11_bac-typ"/>
</dbReference>
<dbReference type="InterPro" id="IPR020783">
    <property type="entry name" value="Ribosomal_uL11_C"/>
</dbReference>
<dbReference type="InterPro" id="IPR036769">
    <property type="entry name" value="Ribosomal_uL11_C_sf"/>
</dbReference>
<dbReference type="InterPro" id="IPR020785">
    <property type="entry name" value="Ribosomal_uL11_CS"/>
</dbReference>
<dbReference type="InterPro" id="IPR020784">
    <property type="entry name" value="Ribosomal_uL11_N"/>
</dbReference>
<dbReference type="InterPro" id="IPR036796">
    <property type="entry name" value="Ribosomal_uL11_N_sf"/>
</dbReference>
<dbReference type="NCBIfam" id="TIGR01632">
    <property type="entry name" value="L11_bact"/>
    <property type="match status" value="1"/>
</dbReference>
<dbReference type="PANTHER" id="PTHR11661">
    <property type="entry name" value="60S RIBOSOMAL PROTEIN L12"/>
    <property type="match status" value="1"/>
</dbReference>
<dbReference type="PANTHER" id="PTHR11661:SF1">
    <property type="entry name" value="LARGE RIBOSOMAL SUBUNIT PROTEIN UL11M"/>
    <property type="match status" value="1"/>
</dbReference>
<dbReference type="Pfam" id="PF00298">
    <property type="entry name" value="Ribosomal_L11"/>
    <property type="match status" value="1"/>
</dbReference>
<dbReference type="Pfam" id="PF03946">
    <property type="entry name" value="Ribosomal_L11_N"/>
    <property type="match status" value="1"/>
</dbReference>
<dbReference type="SMART" id="SM00649">
    <property type="entry name" value="RL11"/>
    <property type="match status" value="1"/>
</dbReference>
<dbReference type="SUPFAM" id="SSF54747">
    <property type="entry name" value="Ribosomal L11/L12e N-terminal domain"/>
    <property type="match status" value="1"/>
</dbReference>
<dbReference type="SUPFAM" id="SSF46906">
    <property type="entry name" value="Ribosomal protein L11, C-terminal domain"/>
    <property type="match status" value="1"/>
</dbReference>
<dbReference type="PROSITE" id="PS00359">
    <property type="entry name" value="RIBOSOMAL_L11"/>
    <property type="match status" value="1"/>
</dbReference>
<keyword id="KW-0488">Methylation</keyword>
<keyword id="KW-1185">Reference proteome</keyword>
<keyword id="KW-0687">Ribonucleoprotein</keyword>
<keyword id="KW-0689">Ribosomal protein</keyword>
<keyword id="KW-0694">RNA-binding</keyword>
<keyword id="KW-0699">rRNA-binding</keyword>
<gene>
    <name evidence="1" type="primary">rplK</name>
    <name type="ordered locus">Daci_0506</name>
</gene>
<evidence type="ECO:0000255" key="1">
    <source>
        <dbReference type="HAMAP-Rule" id="MF_00736"/>
    </source>
</evidence>
<evidence type="ECO:0000305" key="2"/>
<protein>
    <recommendedName>
        <fullName evidence="1">Large ribosomal subunit protein uL11</fullName>
    </recommendedName>
    <alternativeName>
        <fullName evidence="2">50S ribosomal protein L11</fullName>
    </alternativeName>
</protein>
<accession>A9BR94</accession>
<feature type="chain" id="PRO_1000195616" description="Large ribosomal subunit protein uL11">
    <location>
        <begin position="1"/>
        <end position="143"/>
    </location>
</feature>
<sequence>MAKKIVGFIKLQVPAGKANPSPPIGPALGQRGLNIMEFCKAFNAQTQGVEPGLPLPVVITAFADKSFTFIIKTPPATVLIKKAIKLDKGSSNPLKNKVGKITRAQLEEIANTKLKDMNAADVDAAVRTLAGSARSMGVIVEGV</sequence>
<name>RL11_DELAS</name>
<comment type="function">
    <text evidence="1">Forms part of the ribosomal stalk which helps the ribosome interact with GTP-bound translation factors.</text>
</comment>
<comment type="subunit">
    <text evidence="1">Part of the ribosomal stalk of the 50S ribosomal subunit. Interacts with L10 and the large rRNA to form the base of the stalk. L10 forms an elongated spine to which L12 dimers bind in a sequential fashion forming a multimeric L10(L12)X complex.</text>
</comment>
<comment type="PTM">
    <text evidence="1">One or more lysine residues are methylated.</text>
</comment>
<comment type="similarity">
    <text evidence="1">Belongs to the universal ribosomal protein uL11 family.</text>
</comment>